<comment type="catalytic activity">
    <reaction>
        <text>an acyl phosphate + H2O = a carboxylate + phosphate + H(+)</text>
        <dbReference type="Rhea" id="RHEA:14965"/>
        <dbReference type="ChEBI" id="CHEBI:15377"/>
        <dbReference type="ChEBI" id="CHEBI:15378"/>
        <dbReference type="ChEBI" id="CHEBI:29067"/>
        <dbReference type="ChEBI" id="CHEBI:43474"/>
        <dbReference type="ChEBI" id="CHEBI:59918"/>
        <dbReference type="EC" id="3.6.1.7"/>
    </reaction>
</comment>
<comment type="similarity">
    <text evidence="2">Belongs to the acylphosphatase family.</text>
</comment>
<gene>
    <name type="primary">acyP</name>
    <name type="ordered locus">BPUM_0715</name>
</gene>
<evidence type="ECO:0000255" key="1">
    <source>
        <dbReference type="PROSITE-ProRule" id="PRU00520"/>
    </source>
</evidence>
<evidence type="ECO:0000305" key="2"/>
<accession>A8FAY5</accession>
<sequence length="90" mass="10428">MIHYHAIITGRVQGVGFRYFVQGEAVNRGMKGWVRNTDEGHVELKVEGEQQEVLDFLKTVRKGSPFSKVTDMQMEQLPEFAHYQDFRIKG</sequence>
<organism>
    <name type="scientific">Bacillus pumilus (strain SAFR-032)</name>
    <dbReference type="NCBI Taxonomy" id="315750"/>
    <lineage>
        <taxon>Bacteria</taxon>
        <taxon>Bacillati</taxon>
        <taxon>Bacillota</taxon>
        <taxon>Bacilli</taxon>
        <taxon>Bacillales</taxon>
        <taxon>Bacillaceae</taxon>
        <taxon>Bacillus</taxon>
    </lineage>
</organism>
<reference key="1">
    <citation type="journal article" date="2007" name="PLoS ONE">
        <title>Paradoxical DNA repair and peroxide resistance gene conservation in Bacillus pumilus SAFR-032.</title>
        <authorList>
            <person name="Gioia J."/>
            <person name="Yerrapragada S."/>
            <person name="Qin X."/>
            <person name="Jiang H."/>
            <person name="Igboeli O.C."/>
            <person name="Muzny D."/>
            <person name="Dugan-Rocha S."/>
            <person name="Ding Y."/>
            <person name="Hawes A."/>
            <person name="Liu W."/>
            <person name="Perez L."/>
            <person name="Kovar C."/>
            <person name="Dinh H."/>
            <person name="Lee S."/>
            <person name="Nazareth L."/>
            <person name="Blyth P."/>
            <person name="Holder M."/>
            <person name="Buhay C."/>
            <person name="Tirumalai M.R."/>
            <person name="Liu Y."/>
            <person name="Dasgupta I."/>
            <person name="Bokhetache L."/>
            <person name="Fujita M."/>
            <person name="Karouia F."/>
            <person name="Eswara Moorthy P."/>
            <person name="Siefert J."/>
            <person name="Uzman A."/>
            <person name="Buzumbo P."/>
            <person name="Verma A."/>
            <person name="Zwiya H."/>
            <person name="McWilliams B.D."/>
            <person name="Olowu A."/>
            <person name="Clinkenbeard K.D."/>
            <person name="Newcombe D."/>
            <person name="Golebiewski L."/>
            <person name="Petrosino J.F."/>
            <person name="Nicholson W.L."/>
            <person name="Fox G.E."/>
            <person name="Venkateswaran K."/>
            <person name="Highlander S.K."/>
            <person name="Weinstock G.M."/>
        </authorList>
    </citation>
    <scope>NUCLEOTIDE SEQUENCE [LARGE SCALE GENOMIC DNA]</scope>
    <source>
        <strain>SAFR-032</strain>
    </source>
</reference>
<reference key="2">
    <citation type="journal article" date="2016" name="PLoS ONE">
        <title>Bacillus pumilus SAFR-032 Genome Revisited: Sequence Update and Re-Annotation.</title>
        <authorList>
            <person name="Stepanov V.G."/>
            <person name="Tirumalai M.R."/>
            <person name="Montazari S."/>
            <person name="Checinska A."/>
            <person name="Venkateswaran K."/>
            <person name="Fox G.E."/>
        </authorList>
    </citation>
    <scope>SEQUENCE REVISION TO N-TERMINUS</scope>
    <source>
        <strain>SAFR-032</strain>
    </source>
</reference>
<keyword id="KW-0378">Hydrolase</keyword>
<dbReference type="EC" id="3.6.1.7"/>
<dbReference type="EMBL" id="CP000813">
    <property type="protein sequence ID" value="ABV61402.2"/>
    <property type="molecule type" value="Genomic_DNA"/>
</dbReference>
<dbReference type="RefSeq" id="WP_041816166.1">
    <property type="nucleotide sequence ID" value="NC_009848.4"/>
</dbReference>
<dbReference type="SMR" id="A8FAY5"/>
<dbReference type="STRING" id="315750.BPUM_0715"/>
<dbReference type="GeneID" id="5619960"/>
<dbReference type="KEGG" id="bpu:BPUM_0715"/>
<dbReference type="eggNOG" id="COG1254">
    <property type="taxonomic scope" value="Bacteria"/>
</dbReference>
<dbReference type="HOGENOM" id="CLU_141932_2_1_9"/>
<dbReference type="Proteomes" id="UP000001355">
    <property type="component" value="Chromosome"/>
</dbReference>
<dbReference type="GO" id="GO:0003998">
    <property type="term" value="F:acylphosphatase activity"/>
    <property type="evidence" value="ECO:0007669"/>
    <property type="project" value="UniProtKB-EC"/>
</dbReference>
<dbReference type="Gene3D" id="3.30.70.100">
    <property type="match status" value="1"/>
</dbReference>
<dbReference type="InterPro" id="IPR020456">
    <property type="entry name" value="Acylphosphatase"/>
</dbReference>
<dbReference type="InterPro" id="IPR001792">
    <property type="entry name" value="Acylphosphatase-like_dom"/>
</dbReference>
<dbReference type="InterPro" id="IPR036046">
    <property type="entry name" value="Acylphosphatase-like_dom_sf"/>
</dbReference>
<dbReference type="InterPro" id="IPR017968">
    <property type="entry name" value="Acylphosphatase_CS"/>
</dbReference>
<dbReference type="NCBIfam" id="NF010995">
    <property type="entry name" value="PRK14420.1"/>
    <property type="match status" value="1"/>
</dbReference>
<dbReference type="PANTHER" id="PTHR47268">
    <property type="entry name" value="ACYLPHOSPHATASE"/>
    <property type="match status" value="1"/>
</dbReference>
<dbReference type="PANTHER" id="PTHR47268:SF4">
    <property type="entry name" value="ACYLPHOSPHATASE"/>
    <property type="match status" value="1"/>
</dbReference>
<dbReference type="Pfam" id="PF00708">
    <property type="entry name" value="Acylphosphatase"/>
    <property type="match status" value="1"/>
</dbReference>
<dbReference type="PRINTS" id="PR00112">
    <property type="entry name" value="ACYLPHPHTASE"/>
</dbReference>
<dbReference type="SUPFAM" id="SSF54975">
    <property type="entry name" value="Acylphosphatase/BLUF domain-like"/>
    <property type="match status" value="1"/>
</dbReference>
<dbReference type="PROSITE" id="PS00150">
    <property type="entry name" value="ACYLPHOSPHATASE_1"/>
    <property type="match status" value="1"/>
</dbReference>
<dbReference type="PROSITE" id="PS00151">
    <property type="entry name" value="ACYLPHOSPHATASE_2"/>
    <property type="match status" value="1"/>
</dbReference>
<dbReference type="PROSITE" id="PS51160">
    <property type="entry name" value="ACYLPHOSPHATASE_3"/>
    <property type="match status" value="1"/>
</dbReference>
<feature type="chain" id="PRO_0000326658" description="Acylphosphatase">
    <location>
        <begin position="1"/>
        <end position="90"/>
    </location>
</feature>
<feature type="domain" description="Acylphosphatase-like" evidence="1">
    <location>
        <begin position="3"/>
        <end position="90"/>
    </location>
</feature>
<feature type="active site" evidence="1">
    <location>
        <position position="18"/>
    </location>
</feature>
<feature type="active site" evidence="1">
    <location>
        <position position="36"/>
    </location>
</feature>
<protein>
    <recommendedName>
        <fullName>Acylphosphatase</fullName>
        <ecNumber>3.6.1.7</ecNumber>
    </recommendedName>
    <alternativeName>
        <fullName>Acylphosphate phosphohydrolase</fullName>
    </alternativeName>
</protein>
<proteinExistence type="inferred from homology"/>
<name>ACYP_BACP2</name>